<sequence>MLAFTLRFIKNKRYLATLAGALVIIAGLTSQHAWSGNGLPQINGKALAALAKQHPVVVLFRHAERCDRSDNTCLSDSTGITVNGAQDARALGKAFSADIQNYNLYSSNTVRTIQSATWFSAGRSLTVDKKMMDCGSGIYASINTLLKKSQNKNIVIFTHNHCLTYIAKNKRGVKFDPDYLDALVMHAENGKLFLDGEFVPG</sequence>
<reference key="1">
    <citation type="journal article" date="2011" name="J. Bacteriol.">
        <title>Comparative genomics of 28 Salmonella enterica isolates: evidence for CRISPR-mediated adaptive sublineage evolution.</title>
        <authorList>
            <person name="Fricke W.F."/>
            <person name="Mammel M.K."/>
            <person name="McDermott P.F."/>
            <person name="Tartera C."/>
            <person name="White D.G."/>
            <person name="Leclerc J.E."/>
            <person name="Ravel J."/>
            <person name="Cebula T.A."/>
        </authorList>
    </citation>
    <scope>NUCLEOTIDE SEQUENCE [LARGE SCALE GENOMIC DNA]</scope>
    <source>
        <strain>CVM19633</strain>
    </source>
</reference>
<name>AIS_SALSV</name>
<keyword id="KW-0378">Hydrolase</keyword>
<keyword id="KW-0574">Periplasm</keyword>
<keyword id="KW-0732">Signal</keyword>
<protein>
    <recommendedName>
        <fullName evidence="1">Lipopolysaccharide core heptose(II)-phosphate phosphatase</fullName>
        <ecNumber evidence="1">3.1.3.-</ecNumber>
    </recommendedName>
</protein>
<proteinExistence type="inferred from homology"/>
<comment type="function">
    <text evidence="1">Catalyzes the dephosphorylation of heptose(II) of the outer membrane lipopolysaccharide core.</text>
</comment>
<comment type="pathway">
    <text evidence="1">Bacterial outer membrane biogenesis; lipopolysaccharide metabolism.</text>
</comment>
<comment type="subcellular location">
    <subcellularLocation>
        <location evidence="1">Periplasm</location>
    </subcellularLocation>
</comment>
<comment type="similarity">
    <text evidence="1">Belongs to the phosphoglycerate mutase family. Ais subfamily.</text>
</comment>
<gene>
    <name evidence="1" type="primary">ais</name>
    <name type="ordered locus">SeSA_A2524</name>
</gene>
<dbReference type="EC" id="3.1.3.-" evidence="1"/>
<dbReference type="EMBL" id="CP001127">
    <property type="protein sequence ID" value="ACF90386.1"/>
    <property type="molecule type" value="Genomic_DNA"/>
</dbReference>
<dbReference type="SMR" id="B4TPH9"/>
<dbReference type="KEGG" id="sew:SeSA_A2524"/>
<dbReference type="HOGENOM" id="CLU_106705_1_0_6"/>
<dbReference type="UniPathway" id="UPA00451"/>
<dbReference type="Proteomes" id="UP000001865">
    <property type="component" value="Chromosome"/>
</dbReference>
<dbReference type="GO" id="GO:0042597">
    <property type="term" value="C:periplasmic space"/>
    <property type="evidence" value="ECO:0007669"/>
    <property type="project" value="UniProtKB-SubCell"/>
</dbReference>
<dbReference type="GO" id="GO:0016791">
    <property type="term" value="F:phosphatase activity"/>
    <property type="evidence" value="ECO:0007669"/>
    <property type="project" value="UniProtKB-UniRule"/>
</dbReference>
<dbReference type="GO" id="GO:0008653">
    <property type="term" value="P:lipopolysaccharide metabolic process"/>
    <property type="evidence" value="ECO:0007669"/>
    <property type="project" value="UniProtKB-UniRule"/>
</dbReference>
<dbReference type="CDD" id="cd07040">
    <property type="entry name" value="HP"/>
    <property type="match status" value="1"/>
</dbReference>
<dbReference type="Gene3D" id="3.40.50.1240">
    <property type="entry name" value="Phosphoglycerate mutase-like"/>
    <property type="match status" value="1"/>
</dbReference>
<dbReference type="HAMAP" id="MF_01868">
    <property type="entry name" value="Ais"/>
    <property type="match status" value="1"/>
</dbReference>
<dbReference type="InterPro" id="IPR013078">
    <property type="entry name" value="His_Pase_superF_clade-1"/>
</dbReference>
<dbReference type="InterPro" id="IPR029033">
    <property type="entry name" value="His_PPase_superfam"/>
</dbReference>
<dbReference type="InterPro" id="IPR011310">
    <property type="entry name" value="LipoPS_heptP_Pase"/>
</dbReference>
<dbReference type="NCBIfam" id="NF011945">
    <property type="entry name" value="PRK15416.1"/>
    <property type="match status" value="1"/>
</dbReference>
<dbReference type="Pfam" id="PF00300">
    <property type="entry name" value="His_Phos_1"/>
    <property type="match status" value="1"/>
</dbReference>
<dbReference type="PIRSF" id="PIRSF011416">
    <property type="entry name" value="Ais-TraG-AfrS"/>
    <property type="match status" value="1"/>
</dbReference>
<dbReference type="SUPFAM" id="SSF53254">
    <property type="entry name" value="Phosphoglycerate mutase-like"/>
    <property type="match status" value="1"/>
</dbReference>
<organism>
    <name type="scientific">Salmonella schwarzengrund (strain CVM19633)</name>
    <dbReference type="NCBI Taxonomy" id="439843"/>
    <lineage>
        <taxon>Bacteria</taxon>
        <taxon>Pseudomonadati</taxon>
        <taxon>Pseudomonadota</taxon>
        <taxon>Gammaproteobacteria</taxon>
        <taxon>Enterobacterales</taxon>
        <taxon>Enterobacteriaceae</taxon>
        <taxon>Salmonella</taxon>
    </lineage>
</organism>
<evidence type="ECO:0000255" key="1">
    <source>
        <dbReference type="HAMAP-Rule" id="MF_01868"/>
    </source>
</evidence>
<accession>B4TPH9</accession>
<feature type="signal peptide" evidence="1">
    <location>
        <begin position="1"/>
        <end position="35"/>
    </location>
</feature>
<feature type="chain" id="PRO_0000380584" description="Lipopolysaccharide core heptose(II)-phosphate phosphatase">
    <location>
        <begin position="36"/>
        <end position="201"/>
    </location>
</feature>